<reference key="1">
    <citation type="journal article" date="1990" name="Nucleic Acids Res.">
        <title>Nucleotide and deduced amino acid sequences of chicken lactate dehydrogenase-A.</title>
        <authorList>
            <person name="Hirota Y."/>
            <person name="Katsumata A."/>
            <person name="Takeya T."/>
        </authorList>
    </citation>
    <scope>NUCLEOTIDE SEQUENCE [MRNA]</scope>
</reference>
<reference key="2">
    <citation type="book" date="1977" name="Pyridine nucleotide dependent dehydrogenases">
        <editorList>
            <person name="Sund H."/>
        </editorList>
        <authorList>
            <person name="Torff H.-J."/>
            <person name="Becker D."/>
            <person name="Schwarzwalder J."/>
        </authorList>
    </citation>
    <scope>PROTEIN SEQUENCE OF 2-332</scope>
</reference>
<keyword id="KW-0963">Cytoplasm</keyword>
<keyword id="KW-0903">Direct protein sequencing</keyword>
<keyword id="KW-0520">NAD</keyword>
<keyword id="KW-0560">Oxidoreductase</keyword>
<keyword id="KW-1185">Reference proteome</keyword>
<name>LDHA_CHICK</name>
<feature type="initiator methionine" description="Removed" evidence="3">
    <location>
        <position position="1"/>
    </location>
</feature>
<feature type="chain" id="PRO_0000168420" description="L-lactate dehydrogenase A chain">
    <location>
        <begin position="2"/>
        <end position="332"/>
    </location>
</feature>
<feature type="active site" description="Proton acceptor" evidence="1">
    <location>
        <position position="193"/>
    </location>
</feature>
<feature type="binding site" evidence="1">
    <location>
        <begin position="29"/>
        <end position="57"/>
    </location>
    <ligand>
        <name>NAD(+)</name>
        <dbReference type="ChEBI" id="CHEBI:57540"/>
    </ligand>
</feature>
<feature type="binding site" evidence="1">
    <location>
        <position position="99"/>
    </location>
    <ligand>
        <name>NAD(+)</name>
        <dbReference type="ChEBI" id="CHEBI:57540"/>
    </ligand>
</feature>
<feature type="binding site" evidence="1">
    <location>
        <position position="106"/>
    </location>
    <ligand>
        <name>substrate</name>
    </ligand>
</feature>
<feature type="binding site" evidence="1">
    <location>
        <position position="138"/>
    </location>
    <ligand>
        <name>NAD(+)</name>
        <dbReference type="ChEBI" id="CHEBI:57540"/>
    </ligand>
</feature>
<feature type="binding site" evidence="1">
    <location>
        <position position="138"/>
    </location>
    <ligand>
        <name>substrate</name>
    </ligand>
</feature>
<feature type="binding site" evidence="1">
    <location>
        <position position="169"/>
    </location>
    <ligand>
        <name>substrate</name>
    </ligand>
</feature>
<feature type="binding site" evidence="1">
    <location>
        <position position="248"/>
    </location>
    <ligand>
        <name>substrate</name>
    </ligand>
</feature>
<feature type="sequence conflict" description="In Ref. 2; AA sequence." evidence="4" ref="2">
    <original>L</original>
    <variation>M</variation>
    <location>
        <position position="63"/>
    </location>
</feature>
<feature type="sequence conflict" description="In Ref. 2; AA sequence." evidence="4" ref="2">
    <original>I</original>
    <variation>T</variation>
    <location>
        <position position="78"/>
    </location>
</feature>
<feature type="sequence conflict" description="In Ref. 2; AA sequence." evidence="4" ref="2">
    <original>E</original>
    <variation>Q</variation>
    <location>
        <position position="192"/>
    </location>
</feature>
<organism>
    <name type="scientific">Gallus gallus</name>
    <name type="common">Chicken</name>
    <dbReference type="NCBI Taxonomy" id="9031"/>
    <lineage>
        <taxon>Eukaryota</taxon>
        <taxon>Metazoa</taxon>
        <taxon>Chordata</taxon>
        <taxon>Craniata</taxon>
        <taxon>Vertebrata</taxon>
        <taxon>Euteleostomi</taxon>
        <taxon>Archelosauria</taxon>
        <taxon>Archosauria</taxon>
        <taxon>Dinosauria</taxon>
        <taxon>Saurischia</taxon>
        <taxon>Theropoda</taxon>
        <taxon>Coelurosauria</taxon>
        <taxon>Aves</taxon>
        <taxon>Neognathae</taxon>
        <taxon>Galloanserae</taxon>
        <taxon>Galliformes</taxon>
        <taxon>Phasianidae</taxon>
        <taxon>Phasianinae</taxon>
        <taxon>Gallus</taxon>
    </lineage>
</organism>
<dbReference type="EC" id="1.1.1.27" evidence="2"/>
<dbReference type="EMBL" id="X53828">
    <property type="protein sequence ID" value="CAA37824.1"/>
    <property type="molecule type" value="mRNA"/>
</dbReference>
<dbReference type="PIR" id="A00349">
    <property type="entry name" value="DECHLM"/>
</dbReference>
<dbReference type="PIR" id="S12151">
    <property type="entry name" value="S12151"/>
</dbReference>
<dbReference type="RefSeq" id="NP_990615.1">
    <property type="nucleotide sequence ID" value="NM_205284.1"/>
</dbReference>
<dbReference type="SMR" id="P00340"/>
<dbReference type="BioGRID" id="676481">
    <property type="interactions" value="2"/>
</dbReference>
<dbReference type="FunCoup" id="P00340">
    <property type="interactions" value="1533"/>
</dbReference>
<dbReference type="IntAct" id="P00340">
    <property type="interactions" value="1"/>
</dbReference>
<dbReference type="STRING" id="9031.ENSGALP00000038626"/>
<dbReference type="iPTMnet" id="P00340"/>
<dbReference type="PaxDb" id="9031-ENSGALP00000038626"/>
<dbReference type="GeneID" id="396221"/>
<dbReference type="KEGG" id="gga:396221"/>
<dbReference type="CTD" id="3939"/>
<dbReference type="VEuPathDB" id="HostDB:geneid_396221"/>
<dbReference type="eggNOG" id="KOG1495">
    <property type="taxonomic scope" value="Eukaryota"/>
</dbReference>
<dbReference type="InParanoid" id="P00340"/>
<dbReference type="OrthoDB" id="5405561at2759"/>
<dbReference type="PhylomeDB" id="P00340"/>
<dbReference type="Reactome" id="R-GGA-373920">
    <property type="pathway name" value="Pyruvate metabolism"/>
</dbReference>
<dbReference type="SABIO-RK" id="P00340"/>
<dbReference type="UniPathway" id="UPA00554">
    <property type="reaction ID" value="UER00611"/>
</dbReference>
<dbReference type="PRO" id="PR:P00340"/>
<dbReference type="Proteomes" id="UP000000539">
    <property type="component" value="Unassembled WGS sequence"/>
</dbReference>
<dbReference type="GO" id="GO:0005829">
    <property type="term" value="C:cytosol"/>
    <property type="evidence" value="ECO:0000304"/>
    <property type="project" value="Reactome"/>
</dbReference>
<dbReference type="GO" id="GO:0005739">
    <property type="term" value="C:mitochondrion"/>
    <property type="evidence" value="ECO:0000318"/>
    <property type="project" value="GO_Central"/>
</dbReference>
<dbReference type="GO" id="GO:0004459">
    <property type="term" value="F:L-lactate dehydrogenase activity"/>
    <property type="evidence" value="ECO:0000318"/>
    <property type="project" value="GO_Central"/>
</dbReference>
<dbReference type="GO" id="GO:0006089">
    <property type="term" value="P:lactate metabolic process"/>
    <property type="evidence" value="ECO:0000318"/>
    <property type="project" value="GO_Central"/>
</dbReference>
<dbReference type="GO" id="GO:0006090">
    <property type="term" value="P:pyruvate metabolic process"/>
    <property type="evidence" value="ECO:0000318"/>
    <property type="project" value="GO_Central"/>
</dbReference>
<dbReference type="CDD" id="cd05293">
    <property type="entry name" value="LDH_1"/>
    <property type="match status" value="1"/>
</dbReference>
<dbReference type="FunFam" id="3.40.50.720:FF:000029">
    <property type="entry name" value="L-lactate dehydrogenase A chain"/>
    <property type="match status" value="1"/>
</dbReference>
<dbReference type="FunFam" id="3.90.110.10:FF:000003">
    <property type="entry name" value="L-lactate dehydrogenase A chain"/>
    <property type="match status" value="1"/>
</dbReference>
<dbReference type="Gene3D" id="3.90.110.10">
    <property type="entry name" value="Lactate dehydrogenase/glycoside hydrolase, family 4, C-terminal"/>
    <property type="match status" value="1"/>
</dbReference>
<dbReference type="Gene3D" id="3.40.50.720">
    <property type="entry name" value="NAD(P)-binding Rossmann-like Domain"/>
    <property type="match status" value="1"/>
</dbReference>
<dbReference type="HAMAP" id="MF_00488">
    <property type="entry name" value="Lactate_dehydrog"/>
    <property type="match status" value="1"/>
</dbReference>
<dbReference type="InterPro" id="IPR001557">
    <property type="entry name" value="L-lactate/malate_DH"/>
</dbReference>
<dbReference type="InterPro" id="IPR011304">
    <property type="entry name" value="L-lactate_DH"/>
</dbReference>
<dbReference type="InterPro" id="IPR018177">
    <property type="entry name" value="L-lactate_DH_AS"/>
</dbReference>
<dbReference type="InterPro" id="IPR022383">
    <property type="entry name" value="Lactate/malate_DH_C"/>
</dbReference>
<dbReference type="InterPro" id="IPR001236">
    <property type="entry name" value="Lactate/malate_DH_N"/>
</dbReference>
<dbReference type="InterPro" id="IPR015955">
    <property type="entry name" value="Lactate_DH/Glyco_Ohase_4_C"/>
</dbReference>
<dbReference type="InterPro" id="IPR036291">
    <property type="entry name" value="NAD(P)-bd_dom_sf"/>
</dbReference>
<dbReference type="NCBIfam" id="TIGR01771">
    <property type="entry name" value="L-LDH-NAD"/>
    <property type="match status" value="1"/>
</dbReference>
<dbReference type="PANTHER" id="PTHR43128">
    <property type="entry name" value="L-2-HYDROXYCARBOXYLATE DEHYDROGENASE (NAD(P)(+))"/>
    <property type="match status" value="1"/>
</dbReference>
<dbReference type="PANTHER" id="PTHR43128:SF10">
    <property type="entry name" value="L-LACTATE DEHYDROGENASE A CHAIN"/>
    <property type="match status" value="1"/>
</dbReference>
<dbReference type="Pfam" id="PF02866">
    <property type="entry name" value="Ldh_1_C"/>
    <property type="match status" value="1"/>
</dbReference>
<dbReference type="Pfam" id="PF00056">
    <property type="entry name" value="Ldh_1_N"/>
    <property type="match status" value="1"/>
</dbReference>
<dbReference type="PIRSF" id="PIRSF000102">
    <property type="entry name" value="Lac_mal_DH"/>
    <property type="match status" value="1"/>
</dbReference>
<dbReference type="PRINTS" id="PR00086">
    <property type="entry name" value="LLDHDRGNASE"/>
</dbReference>
<dbReference type="SUPFAM" id="SSF56327">
    <property type="entry name" value="LDH C-terminal domain-like"/>
    <property type="match status" value="1"/>
</dbReference>
<dbReference type="SUPFAM" id="SSF51735">
    <property type="entry name" value="NAD(P)-binding Rossmann-fold domains"/>
    <property type="match status" value="1"/>
</dbReference>
<dbReference type="PROSITE" id="PS00064">
    <property type="entry name" value="L_LDH"/>
    <property type="match status" value="1"/>
</dbReference>
<protein>
    <recommendedName>
        <fullName>L-lactate dehydrogenase A chain</fullName>
        <shortName>LDH-A</shortName>
        <ecNumber evidence="2">1.1.1.27</ecNumber>
    </recommendedName>
</protein>
<proteinExistence type="evidence at protein level"/>
<gene>
    <name type="primary">LDHA</name>
</gene>
<sequence length="332" mass="36514">MSLKDHLIHNVHKEEHAHAHNKISVVGVGAVGMACAISILMKDLADELTLVDVVEDKLKGEMLDLQHGSLFLKTPKIISGKDYSVTAHSKLVIVTAGARQQEGESRLNLVQRNVNIFKFIIPNVVKYSPDCKLLIVSNPVDILTYVAWKISGFPKHRVIGSGCNLDSARFRHLMGERLGIHPLSCHGWIVGEHGDSSVPVWSGVNVAGVSLKALHPDMGTDADKEHWKEVHKQVVDSAYEVIKLKGYTSWAIGLSVADLAETIMKNLRRVHPISTAVKGMHGIKDDVFLSVPCVLGSSGITDVVKMILKPDEEEKIKKSADTLWGIQKELQF</sequence>
<accession>P00340</accession>
<evidence type="ECO:0000250" key="1"/>
<evidence type="ECO:0000250" key="2">
    <source>
        <dbReference type="UniProtKB" id="P00338"/>
    </source>
</evidence>
<evidence type="ECO:0000269" key="3">
    <source ref="2"/>
</evidence>
<evidence type="ECO:0000305" key="4"/>
<comment type="function">
    <text evidence="2">Interconverts simultaneously and stereospecifically pyruvate and lactate with concomitant interconversion of NADH and NAD(+).</text>
</comment>
<comment type="catalytic activity">
    <reaction evidence="2">
        <text>(S)-lactate + NAD(+) = pyruvate + NADH + H(+)</text>
        <dbReference type="Rhea" id="RHEA:23444"/>
        <dbReference type="ChEBI" id="CHEBI:15361"/>
        <dbReference type="ChEBI" id="CHEBI:15378"/>
        <dbReference type="ChEBI" id="CHEBI:16651"/>
        <dbReference type="ChEBI" id="CHEBI:57540"/>
        <dbReference type="ChEBI" id="CHEBI:57945"/>
        <dbReference type="EC" id="1.1.1.27"/>
    </reaction>
    <physiologicalReaction direction="left-to-right" evidence="2">
        <dbReference type="Rhea" id="RHEA:23445"/>
    </physiologicalReaction>
    <physiologicalReaction direction="right-to-left" evidence="2">
        <dbReference type="Rhea" id="RHEA:23446"/>
    </physiologicalReaction>
</comment>
<comment type="pathway">
    <text evidence="2">Fermentation; pyruvate fermentation to lactate; (S)-lactate from pyruvate: step 1/1.</text>
</comment>
<comment type="subunit">
    <text>Homotetramer.</text>
</comment>
<comment type="subcellular location">
    <subcellularLocation>
        <location>Cytoplasm</location>
    </subcellularLocation>
</comment>
<comment type="similarity">
    <text evidence="4">Belongs to the LDH/MDH superfamily. LDH family.</text>
</comment>